<gene>
    <name type="primary">Klhl23</name>
</gene>
<evidence type="ECO:0000255" key="1">
    <source>
        <dbReference type="PROSITE-ProRule" id="PRU00037"/>
    </source>
</evidence>
<evidence type="ECO:0000305" key="2"/>
<organism>
    <name type="scientific">Mus musculus</name>
    <name type="common">Mouse</name>
    <dbReference type="NCBI Taxonomy" id="10090"/>
    <lineage>
        <taxon>Eukaryota</taxon>
        <taxon>Metazoa</taxon>
        <taxon>Chordata</taxon>
        <taxon>Craniata</taxon>
        <taxon>Vertebrata</taxon>
        <taxon>Euteleostomi</taxon>
        <taxon>Mammalia</taxon>
        <taxon>Eutheria</taxon>
        <taxon>Euarchontoglires</taxon>
        <taxon>Glires</taxon>
        <taxon>Rodentia</taxon>
        <taxon>Myomorpha</taxon>
        <taxon>Muroidea</taxon>
        <taxon>Muridae</taxon>
        <taxon>Murinae</taxon>
        <taxon>Mus</taxon>
        <taxon>Mus</taxon>
    </lineage>
</organism>
<keyword id="KW-0880">Kelch repeat</keyword>
<keyword id="KW-1185">Reference proteome</keyword>
<keyword id="KW-0677">Repeat</keyword>
<feature type="chain" id="PRO_0000242158" description="Kelch-like protein 23">
    <location>
        <begin position="1"/>
        <end position="558"/>
    </location>
</feature>
<feature type="domain" description="BTB" evidence="1">
    <location>
        <begin position="36"/>
        <end position="104"/>
    </location>
</feature>
<feature type="domain" description="BACK">
    <location>
        <begin position="139"/>
        <end position="240"/>
    </location>
</feature>
<feature type="repeat" description="Kelch 1">
    <location>
        <begin position="274"/>
        <end position="320"/>
    </location>
</feature>
<feature type="repeat" description="Kelch 2">
    <location>
        <begin position="321"/>
        <end position="369"/>
    </location>
</feature>
<feature type="repeat" description="Kelch 3">
    <location>
        <begin position="370"/>
        <end position="416"/>
    </location>
</feature>
<feature type="repeat" description="Kelch 4">
    <location>
        <begin position="418"/>
        <end position="466"/>
    </location>
</feature>
<feature type="repeat" description="Kelch 5">
    <location>
        <begin position="467"/>
        <end position="508"/>
    </location>
</feature>
<feature type="repeat" description="Kelch 6">
    <location>
        <begin position="510"/>
        <end position="557"/>
    </location>
</feature>
<feature type="sequence conflict" description="In Ref. 1; BAC33355." evidence="2" ref="1">
    <original>R</original>
    <variation>G</variation>
    <location>
        <position position="359"/>
    </location>
</feature>
<dbReference type="EMBL" id="AK048518">
    <property type="protein sequence ID" value="BAC33355.1"/>
    <property type="molecule type" value="mRNA"/>
</dbReference>
<dbReference type="EMBL" id="AL845261">
    <property type="status" value="NOT_ANNOTATED_CDS"/>
    <property type="molecule type" value="Genomic_DNA"/>
</dbReference>
<dbReference type="EMBL" id="BC072626">
    <property type="protein sequence ID" value="AAH72626.1"/>
    <property type="molecule type" value="mRNA"/>
</dbReference>
<dbReference type="CCDS" id="CCDS16100.1"/>
<dbReference type="RefSeq" id="NP_001347323.1">
    <property type="nucleotide sequence ID" value="NM_001360394.2"/>
</dbReference>
<dbReference type="RefSeq" id="NP_001347324.1">
    <property type="nucleotide sequence ID" value="NM_001360395.2"/>
</dbReference>
<dbReference type="RefSeq" id="NP_808452.2">
    <property type="nucleotide sequence ID" value="NM_177784.5"/>
</dbReference>
<dbReference type="RefSeq" id="XP_006499740.1">
    <property type="nucleotide sequence ID" value="XM_006499677.1"/>
</dbReference>
<dbReference type="RefSeq" id="XP_006499741.1">
    <property type="nucleotide sequence ID" value="XM_006499678.3"/>
</dbReference>
<dbReference type="SMR" id="Q6GQU2"/>
<dbReference type="BioGRID" id="234936">
    <property type="interactions" value="12"/>
</dbReference>
<dbReference type="FunCoup" id="Q6GQU2">
    <property type="interactions" value="13"/>
</dbReference>
<dbReference type="STRING" id="10090.ENSMUSP00000050219"/>
<dbReference type="PhosphoSitePlus" id="Q6GQU2"/>
<dbReference type="jPOST" id="Q6GQU2"/>
<dbReference type="PaxDb" id="10090-ENSMUSP00000050219"/>
<dbReference type="ProteomicsDB" id="263555"/>
<dbReference type="Antibodypedia" id="33817">
    <property type="antibodies" value="75 antibodies from 16 providers"/>
</dbReference>
<dbReference type="DNASU" id="277396"/>
<dbReference type="Ensembl" id="ENSMUST00000053087.4">
    <property type="protein sequence ID" value="ENSMUSP00000050219.4"/>
    <property type="gene ID" value="ENSMUSG00000042155.4"/>
</dbReference>
<dbReference type="GeneID" id="277396"/>
<dbReference type="KEGG" id="mmu:277396"/>
<dbReference type="UCSC" id="uc008jys.2">
    <property type="organism name" value="mouse"/>
</dbReference>
<dbReference type="AGR" id="MGI:2683536"/>
<dbReference type="CTD" id="151230"/>
<dbReference type="MGI" id="MGI:2683536">
    <property type="gene designation" value="Klhl23"/>
</dbReference>
<dbReference type="VEuPathDB" id="HostDB:ENSMUSG00000042155"/>
<dbReference type="eggNOG" id="KOG4441">
    <property type="taxonomic scope" value="Eukaryota"/>
</dbReference>
<dbReference type="GeneTree" id="ENSGT00940000159106"/>
<dbReference type="HOGENOM" id="CLU_004253_14_6_1"/>
<dbReference type="InParanoid" id="Q6GQU2"/>
<dbReference type="OMA" id="HIWDPIS"/>
<dbReference type="OrthoDB" id="7956040at2759"/>
<dbReference type="PhylomeDB" id="Q6GQU2"/>
<dbReference type="TreeFam" id="TF329218"/>
<dbReference type="BioGRID-ORCS" id="277396">
    <property type="hits" value="2 hits in 77 CRISPR screens"/>
</dbReference>
<dbReference type="ChiTaRS" id="Klhl23">
    <property type="organism name" value="mouse"/>
</dbReference>
<dbReference type="PRO" id="PR:Q6GQU2"/>
<dbReference type="Proteomes" id="UP000000589">
    <property type="component" value="Chromosome 2"/>
</dbReference>
<dbReference type="RNAct" id="Q6GQU2">
    <property type="molecule type" value="protein"/>
</dbReference>
<dbReference type="Bgee" id="ENSMUSG00000042155">
    <property type="expression patterns" value="Expressed in ureter smooth muscle and 220 other cell types or tissues"/>
</dbReference>
<dbReference type="CDD" id="cd18462">
    <property type="entry name" value="BACK_KLHL23"/>
    <property type="match status" value="1"/>
</dbReference>
<dbReference type="CDD" id="cd18252">
    <property type="entry name" value="BTB_POZ_KLHL23"/>
    <property type="match status" value="1"/>
</dbReference>
<dbReference type="Gene3D" id="1.25.40.420">
    <property type="match status" value="1"/>
</dbReference>
<dbReference type="Gene3D" id="2.120.10.80">
    <property type="entry name" value="Kelch-type beta propeller"/>
    <property type="match status" value="2"/>
</dbReference>
<dbReference type="Gene3D" id="3.30.710.10">
    <property type="entry name" value="Potassium Channel Kv1.1, Chain A"/>
    <property type="match status" value="1"/>
</dbReference>
<dbReference type="InterPro" id="IPR011705">
    <property type="entry name" value="BACK"/>
</dbReference>
<dbReference type="InterPro" id="IPR017096">
    <property type="entry name" value="BTB-kelch_protein"/>
</dbReference>
<dbReference type="InterPro" id="IPR000210">
    <property type="entry name" value="BTB/POZ_dom"/>
</dbReference>
<dbReference type="InterPro" id="IPR030566">
    <property type="entry name" value="BTB_POZ_KLHL23"/>
</dbReference>
<dbReference type="InterPro" id="IPR015915">
    <property type="entry name" value="Kelch-typ_b-propeller"/>
</dbReference>
<dbReference type="InterPro" id="IPR006652">
    <property type="entry name" value="Kelch_1"/>
</dbReference>
<dbReference type="InterPro" id="IPR047068">
    <property type="entry name" value="KLHL23_BACK"/>
</dbReference>
<dbReference type="InterPro" id="IPR011333">
    <property type="entry name" value="SKP1/BTB/POZ_sf"/>
</dbReference>
<dbReference type="PANTHER" id="PTHR24412">
    <property type="entry name" value="KELCH PROTEIN"/>
    <property type="match status" value="1"/>
</dbReference>
<dbReference type="PANTHER" id="PTHR24412:SF489">
    <property type="entry name" value="RING FINGER DOMAIN AND KELCH REPEAT-CONTAINING PROTEIN DDB_G0271372"/>
    <property type="match status" value="1"/>
</dbReference>
<dbReference type="Pfam" id="PF07707">
    <property type="entry name" value="BACK"/>
    <property type="match status" value="1"/>
</dbReference>
<dbReference type="Pfam" id="PF00651">
    <property type="entry name" value="BTB"/>
    <property type="match status" value="1"/>
</dbReference>
<dbReference type="Pfam" id="PF01344">
    <property type="entry name" value="Kelch_1"/>
    <property type="match status" value="1"/>
</dbReference>
<dbReference type="Pfam" id="PF24681">
    <property type="entry name" value="Kelch_KLHDC2_KLHL20_DRC7"/>
    <property type="match status" value="1"/>
</dbReference>
<dbReference type="PIRSF" id="PIRSF037037">
    <property type="entry name" value="Kelch-like_protein_gigaxonin"/>
    <property type="match status" value="1"/>
</dbReference>
<dbReference type="SMART" id="SM00875">
    <property type="entry name" value="BACK"/>
    <property type="match status" value="1"/>
</dbReference>
<dbReference type="SMART" id="SM00225">
    <property type="entry name" value="BTB"/>
    <property type="match status" value="1"/>
</dbReference>
<dbReference type="SMART" id="SM00612">
    <property type="entry name" value="Kelch"/>
    <property type="match status" value="6"/>
</dbReference>
<dbReference type="SUPFAM" id="SSF117281">
    <property type="entry name" value="Kelch motif"/>
    <property type="match status" value="1"/>
</dbReference>
<dbReference type="SUPFAM" id="SSF54695">
    <property type="entry name" value="POZ domain"/>
    <property type="match status" value="1"/>
</dbReference>
<dbReference type="PROSITE" id="PS50097">
    <property type="entry name" value="BTB"/>
    <property type="match status" value="1"/>
</dbReference>
<accession>Q6GQU2</accession>
<accession>A2AR06</accession>
<accession>Q8C840</accession>
<protein>
    <recommendedName>
        <fullName>Kelch-like protein 23</fullName>
    </recommendedName>
</protein>
<sequence>MALKGQEDYIFHFKDSSHPVDFLDAFRTFYMDGLFTDITLQCPSGIIFHCHRAVLAACSNYFKAMFTADMKEKFKSKIKLSGIHHDILEGLVNYAYTSQIEITKRNVQSLLEAADLLQFLSVKKACEQFLVRHLDIDNCIGMHSFAEFHVCSELEKESRRILCSRFKEVWQQEEFLEISLEKFLFILSRKNLSVWKEEAILEPVIKWTAHDVENRIECIYNLLSYINIDIDPVYLKTALGLQRSCLLTENKIRSLIYNALNPMHKEISQRSTATMYIIGGYYWHPLSEVHIWDPLTNVWIQGAEIPDYTRESYGVTCLGPNIYVTGGYRTDNIDALDTVWIYNSEGDEWTEGLPMLNARYYHCAVTLGGCVYALGGYRKGAPAEEAEFYDPLKEKWLPIANMIKGVGNATACVLHEVIYVIGGHCGYRGSCTYDKVQSYNSDINEWSLITASPHPEYGLCSVPFENKLYLVGGQTTITECYDPEQNEWRETAPMMERRMECGAVIMNGCIYVTGGYSYSKGTYLQSIEKYDPDLNKWEIVGNLPSAMRSHGCVCVYNV</sequence>
<name>KLH23_MOUSE</name>
<reference key="1">
    <citation type="journal article" date="2005" name="Science">
        <title>The transcriptional landscape of the mammalian genome.</title>
        <authorList>
            <person name="Carninci P."/>
            <person name="Kasukawa T."/>
            <person name="Katayama S."/>
            <person name="Gough J."/>
            <person name="Frith M.C."/>
            <person name="Maeda N."/>
            <person name="Oyama R."/>
            <person name="Ravasi T."/>
            <person name="Lenhard B."/>
            <person name="Wells C."/>
            <person name="Kodzius R."/>
            <person name="Shimokawa K."/>
            <person name="Bajic V.B."/>
            <person name="Brenner S.E."/>
            <person name="Batalov S."/>
            <person name="Forrest A.R."/>
            <person name="Zavolan M."/>
            <person name="Davis M.J."/>
            <person name="Wilming L.G."/>
            <person name="Aidinis V."/>
            <person name="Allen J.E."/>
            <person name="Ambesi-Impiombato A."/>
            <person name="Apweiler R."/>
            <person name="Aturaliya R.N."/>
            <person name="Bailey T.L."/>
            <person name="Bansal M."/>
            <person name="Baxter L."/>
            <person name="Beisel K.W."/>
            <person name="Bersano T."/>
            <person name="Bono H."/>
            <person name="Chalk A.M."/>
            <person name="Chiu K.P."/>
            <person name="Choudhary V."/>
            <person name="Christoffels A."/>
            <person name="Clutterbuck D.R."/>
            <person name="Crowe M.L."/>
            <person name="Dalla E."/>
            <person name="Dalrymple B.P."/>
            <person name="de Bono B."/>
            <person name="Della Gatta G."/>
            <person name="di Bernardo D."/>
            <person name="Down T."/>
            <person name="Engstrom P."/>
            <person name="Fagiolini M."/>
            <person name="Faulkner G."/>
            <person name="Fletcher C.F."/>
            <person name="Fukushima T."/>
            <person name="Furuno M."/>
            <person name="Futaki S."/>
            <person name="Gariboldi M."/>
            <person name="Georgii-Hemming P."/>
            <person name="Gingeras T.R."/>
            <person name="Gojobori T."/>
            <person name="Green R.E."/>
            <person name="Gustincich S."/>
            <person name="Harbers M."/>
            <person name="Hayashi Y."/>
            <person name="Hensch T.K."/>
            <person name="Hirokawa N."/>
            <person name="Hill D."/>
            <person name="Huminiecki L."/>
            <person name="Iacono M."/>
            <person name="Ikeo K."/>
            <person name="Iwama A."/>
            <person name="Ishikawa T."/>
            <person name="Jakt M."/>
            <person name="Kanapin A."/>
            <person name="Katoh M."/>
            <person name="Kawasawa Y."/>
            <person name="Kelso J."/>
            <person name="Kitamura H."/>
            <person name="Kitano H."/>
            <person name="Kollias G."/>
            <person name="Krishnan S.P."/>
            <person name="Kruger A."/>
            <person name="Kummerfeld S.K."/>
            <person name="Kurochkin I.V."/>
            <person name="Lareau L.F."/>
            <person name="Lazarevic D."/>
            <person name="Lipovich L."/>
            <person name="Liu J."/>
            <person name="Liuni S."/>
            <person name="McWilliam S."/>
            <person name="Madan Babu M."/>
            <person name="Madera M."/>
            <person name="Marchionni L."/>
            <person name="Matsuda H."/>
            <person name="Matsuzawa S."/>
            <person name="Miki H."/>
            <person name="Mignone F."/>
            <person name="Miyake S."/>
            <person name="Morris K."/>
            <person name="Mottagui-Tabar S."/>
            <person name="Mulder N."/>
            <person name="Nakano N."/>
            <person name="Nakauchi H."/>
            <person name="Ng P."/>
            <person name="Nilsson R."/>
            <person name="Nishiguchi S."/>
            <person name="Nishikawa S."/>
            <person name="Nori F."/>
            <person name="Ohara O."/>
            <person name="Okazaki Y."/>
            <person name="Orlando V."/>
            <person name="Pang K.C."/>
            <person name="Pavan W.J."/>
            <person name="Pavesi G."/>
            <person name="Pesole G."/>
            <person name="Petrovsky N."/>
            <person name="Piazza S."/>
            <person name="Reed J."/>
            <person name="Reid J.F."/>
            <person name="Ring B.Z."/>
            <person name="Ringwald M."/>
            <person name="Rost B."/>
            <person name="Ruan Y."/>
            <person name="Salzberg S.L."/>
            <person name="Sandelin A."/>
            <person name="Schneider C."/>
            <person name="Schoenbach C."/>
            <person name="Sekiguchi K."/>
            <person name="Semple C.A."/>
            <person name="Seno S."/>
            <person name="Sessa L."/>
            <person name="Sheng Y."/>
            <person name="Shibata Y."/>
            <person name="Shimada H."/>
            <person name="Shimada K."/>
            <person name="Silva D."/>
            <person name="Sinclair B."/>
            <person name="Sperling S."/>
            <person name="Stupka E."/>
            <person name="Sugiura K."/>
            <person name="Sultana R."/>
            <person name="Takenaka Y."/>
            <person name="Taki K."/>
            <person name="Tammoja K."/>
            <person name="Tan S.L."/>
            <person name="Tang S."/>
            <person name="Taylor M.S."/>
            <person name="Tegner J."/>
            <person name="Teichmann S.A."/>
            <person name="Ueda H.R."/>
            <person name="van Nimwegen E."/>
            <person name="Verardo R."/>
            <person name="Wei C.L."/>
            <person name="Yagi K."/>
            <person name="Yamanishi H."/>
            <person name="Zabarovsky E."/>
            <person name="Zhu S."/>
            <person name="Zimmer A."/>
            <person name="Hide W."/>
            <person name="Bult C."/>
            <person name="Grimmond S.M."/>
            <person name="Teasdale R.D."/>
            <person name="Liu E.T."/>
            <person name="Brusic V."/>
            <person name="Quackenbush J."/>
            <person name="Wahlestedt C."/>
            <person name="Mattick J.S."/>
            <person name="Hume D.A."/>
            <person name="Kai C."/>
            <person name="Sasaki D."/>
            <person name="Tomaru Y."/>
            <person name="Fukuda S."/>
            <person name="Kanamori-Katayama M."/>
            <person name="Suzuki M."/>
            <person name="Aoki J."/>
            <person name="Arakawa T."/>
            <person name="Iida J."/>
            <person name="Imamura K."/>
            <person name="Itoh M."/>
            <person name="Kato T."/>
            <person name="Kawaji H."/>
            <person name="Kawagashira N."/>
            <person name="Kawashima T."/>
            <person name="Kojima M."/>
            <person name="Kondo S."/>
            <person name="Konno H."/>
            <person name="Nakano K."/>
            <person name="Ninomiya N."/>
            <person name="Nishio T."/>
            <person name="Okada M."/>
            <person name="Plessy C."/>
            <person name="Shibata K."/>
            <person name="Shiraki T."/>
            <person name="Suzuki S."/>
            <person name="Tagami M."/>
            <person name="Waki K."/>
            <person name="Watahiki A."/>
            <person name="Okamura-Oho Y."/>
            <person name="Suzuki H."/>
            <person name="Kawai J."/>
            <person name="Hayashizaki Y."/>
        </authorList>
    </citation>
    <scope>NUCLEOTIDE SEQUENCE [LARGE SCALE MRNA]</scope>
    <source>
        <strain>C57BL/6J</strain>
        <tissue>Head</tissue>
    </source>
</reference>
<reference key="2">
    <citation type="journal article" date="2009" name="PLoS Biol.">
        <title>Lineage-specific biology revealed by a finished genome assembly of the mouse.</title>
        <authorList>
            <person name="Church D.M."/>
            <person name="Goodstadt L."/>
            <person name="Hillier L.W."/>
            <person name="Zody M.C."/>
            <person name="Goldstein S."/>
            <person name="She X."/>
            <person name="Bult C.J."/>
            <person name="Agarwala R."/>
            <person name="Cherry J.L."/>
            <person name="DiCuccio M."/>
            <person name="Hlavina W."/>
            <person name="Kapustin Y."/>
            <person name="Meric P."/>
            <person name="Maglott D."/>
            <person name="Birtle Z."/>
            <person name="Marques A.C."/>
            <person name="Graves T."/>
            <person name="Zhou S."/>
            <person name="Teague B."/>
            <person name="Potamousis K."/>
            <person name="Churas C."/>
            <person name="Place M."/>
            <person name="Herschleb J."/>
            <person name="Runnheim R."/>
            <person name="Forrest D."/>
            <person name="Amos-Landgraf J."/>
            <person name="Schwartz D.C."/>
            <person name="Cheng Z."/>
            <person name="Lindblad-Toh K."/>
            <person name="Eichler E.E."/>
            <person name="Ponting C.P."/>
        </authorList>
    </citation>
    <scope>NUCLEOTIDE SEQUENCE [LARGE SCALE GENOMIC DNA]</scope>
    <source>
        <strain>C57BL/6J</strain>
    </source>
</reference>
<reference key="3">
    <citation type="journal article" date="2004" name="Genome Res.">
        <title>The status, quality, and expansion of the NIH full-length cDNA project: the Mammalian Gene Collection (MGC).</title>
        <authorList>
            <consortium name="The MGC Project Team"/>
        </authorList>
    </citation>
    <scope>NUCLEOTIDE SEQUENCE [LARGE SCALE MRNA]</scope>
    <source>
        <strain>C57BL/6J</strain>
        <tissue>Brain</tissue>
    </source>
</reference>
<proteinExistence type="evidence at transcript level"/>